<dbReference type="EMBL" id="AE016879">
    <property type="protein sequence ID" value="AAP28627.1"/>
    <property type="molecule type" value="Genomic_DNA"/>
</dbReference>
<dbReference type="EMBL" id="AE017334">
    <property type="protein sequence ID" value="AAT34064.1"/>
    <property type="molecule type" value="Genomic_DNA"/>
</dbReference>
<dbReference type="EMBL" id="AE017225">
    <property type="protein sequence ID" value="AAT56884.1"/>
    <property type="molecule type" value="Genomic_DNA"/>
</dbReference>
<dbReference type="RefSeq" id="NP_847141.1">
    <property type="nucleotide sequence ID" value="NC_003997.3"/>
</dbReference>
<dbReference type="RefSeq" id="WP_003170695.1">
    <property type="nucleotide sequence ID" value="NZ_WXXJ01000026.1"/>
</dbReference>
<dbReference type="RefSeq" id="YP_030834.1">
    <property type="nucleotide sequence ID" value="NC_005945.1"/>
</dbReference>
<dbReference type="IntAct" id="Q81KP9">
    <property type="interactions" value="1"/>
</dbReference>
<dbReference type="STRING" id="261594.GBAA_4944"/>
<dbReference type="DNASU" id="1084147"/>
<dbReference type="GeneID" id="45024563"/>
<dbReference type="KEGG" id="ban:BA_4944"/>
<dbReference type="KEGG" id="bar:GBAA_4944"/>
<dbReference type="KEGG" id="bat:BAS4588"/>
<dbReference type="PATRIC" id="fig|198094.11.peg.4903"/>
<dbReference type="eggNOG" id="COG4848">
    <property type="taxonomic scope" value="Bacteria"/>
</dbReference>
<dbReference type="HOGENOM" id="CLU_085634_0_0_9"/>
<dbReference type="OMA" id="LAQMTMS"/>
<dbReference type="OrthoDB" id="154553at2"/>
<dbReference type="Proteomes" id="UP000000427">
    <property type="component" value="Chromosome"/>
</dbReference>
<dbReference type="Proteomes" id="UP000000594">
    <property type="component" value="Chromosome"/>
</dbReference>
<dbReference type="HAMAP" id="MF_01548">
    <property type="entry name" value="UPF0354"/>
    <property type="match status" value="1"/>
</dbReference>
<dbReference type="InterPro" id="IPR010838">
    <property type="entry name" value="DUF1444"/>
</dbReference>
<dbReference type="NCBIfam" id="NF010189">
    <property type="entry name" value="PRK13668.1"/>
    <property type="match status" value="1"/>
</dbReference>
<dbReference type="Pfam" id="PF07285">
    <property type="entry name" value="DUF1444"/>
    <property type="match status" value="1"/>
</dbReference>
<dbReference type="PIRSF" id="PIRSF012562">
    <property type="entry name" value="UCP012562"/>
    <property type="match status" value="1"/>
</dbReference>
<keyword id="KW-1185">Reference proteome</keyword>
<proteinExistence type="inferred from homology"/>
<reference key="1">
    <citation type="journal article" date="2003" name="Nature">
        <title>The genome sequence of Bacillus anthracis Ames and comparison to closely related bacteria.</title>
        <authorList>
            <person name="Read T.D."/>
            <person name="Peterson S.N."/>
            <person name="Tourasse N.J."/>
            <person name="Baillie L.W."/>
            <person name="Paulsen I.T."/>
            <person name="Nelson K.E."/>
            <person name="Tettelin H."/>
            <person name="Fouts D.E."/>
            <person name="Eisen J.A."/>
            <person name="Gill S.R."/>
            <person name="Holtzapple E.K."/>
            <person name="Okstad O.A."/>
            <person name="Helgason E."/>
            <person name="Rilstone J."/>
            <person name="Wu M."/>
            <person name="Kolonay J.F."/>
            <person name="Beanan M.J."/>
            <person name="Dodson R.J."/>
            <person name="Brinkac L.M."/>
            <person name="Gwinn M.L."/>
            <person name="DeBoy R.T."/>
            <person name="Madpu R."/>
            <person name="Daugherty S.C."/>
            <person name="Durkin A.S."/>
            <person name="Haft D.H."/>
            <person name="Nelson W.C."/>
            <person name="Peterson J.D."/>
            <person name="Pop M."/>
            <person name="Khouri H.M."/>
            <person name="Radune D."/>
            <person name="Benton J.L."/>
            <person name="Mahamoud Y."/>
            <person name="Jiang L."/>
            <person name="Hance I.R."/>
            <person name="Weidman J.F."/>
            <person name="Berry K.J."/>
            <person name="Plaut R.D."/>
            <person name="Wolf A.M."/>
            <person name="Watkins K.L."/>
            <person name="Nierman W.C."/>
            <person name="Hazen A."/>
            <person name="Cline R.T."/>
            <person name="Redmond C."/>
            <person name="Thwaite J.E."/>
            <person name="White O."/>
            <person name="Salzberg S.L."/>
            <person name="Thomason B."/>
            <person name="Friedlander A.M."/>
            <person name="Koehler T.M."/>
            <person name="Hanna P.C."/>
            <person name="Kolstoe A.-B."/>
            <person name="Fraser C.M."/>
        </authorList>
    </citation>
    <scope>NUCLEOTIDE SEQUENCE [LARGE SCALE GENOMIC DNA]</scope>
    <source>
        <strain>Ames / isolate Porton</strain>
    </source>
</reference>
<reference key="2">
    <citation type="journal article" date="2009" name="J. Bacteriol.">
        <title>The complete genome sequence of Bacillus anthracis Ames 'Ancestor'.</title>
        <authorList>
            <person name="Ravel J."/>
            <person name="Jiang L."/>
            <person name="Stanley S.T."/>
            <person name="Wilson M.R."/>
            <person name="Decker R.S."/>
            <person name="Read T.D."/>
            <person name="Worsham P."/>
            <person name="Keim P.S."/>
            <person name="Salzberg S.L."/>
            <person name="Fraser-Liggett C.M."/>
            <person name="Rasko D.A."/>
        </authorList>
    </citation>
    <scope>NUCLEOTIDE SEQUENCE [LARGE SCALE GENOMIC DNA]</scope>
    <source>
        <strain>Ames ancestor</strain>
    </source>
</reference>
<reference key="3">
    <citation type="submission" date="2004-01" db="EMBL/GenBank/DDBJ databases">
        <title>Complete genome sequence of Bacillus anthracis Sterne.</title>
        <authorList>
            <person name="Brettin T.S."/>
            <person name="Bruce D."/>
            <person name="Challacombe J.F."/>
            <person name="Gilna P."/>
            <person name="Han C."/>
            <person name="Hill K."/>
            <person name="Hitchcock P."/>
            <person name="Jackson P."/>
            <person name="Keim P."/>
            <person name="Longmire J."/>
            <person name="Lucas S."/>
            <person name="Okinaka R."/>
            <person name="Richardson P."/>
            <person name="Rubin E."/>
            <person name="Tice H."/>
        </authorList>
    </citation>
    <scope>NUCLEOTIDE SEQUENCE [LARGE SCALE GENOMIC DNA]</scope>
    <source>
        <strain>Sterne</strain>
    </source>
</reference>
<comment type="similarity">
    <text evidence="1">Belongs to the UPF0354 family.</text>
</comment>
<feature type="chain" id="PRO_0000171093" description="UPF0354 protein BA_4944/GBAA_4944/BAS4588">
    <location>
        <begin position="1"/>
        <end position="270"/>
    </location>
</feature>
<accession>Q81KP9</accession>
<accession>Q6HS54</accession>
<accession>Q6KLF4</accession>
<name>Y4944_BACAN</name>
<gene>
    <name type="ordered locus">BA_4944</name>
    <name type="ordered locus">GBAA_4944</name>
    <name type="ordered locus">BAS4588</name>
</gene>
<evidence type="ECO:0000255" key="1">
    <source>
        <dbReference type="HAMAP-Rule" id="MF_01548"/>
    </source>
</evidence>
<sequence>MKMTSKKMKDELMKKLSRPEWDFHYDSEKEVLRIEQKDSKKGINVSLPGVVAKWEVNKEKAIEEVAYYVQEALIAMHKEENSAAKILPVIRSTSFPKQAEEGNPFIMTDHTAETRIYYALDSNKTYRLIDERLLQKLGLTEKQVREMALFNARSLGYEFKQDTVAGNTFYFLNTNDGYDATRILNESLLQSMREKISGDMVVAVPHQDVLIIADIVNEIGYDIIAQMTMKFFAEGHVPITSLSFVYEDGDFEPIFILAKNRKKTDGKEKG</sequence>
<organism>
    <name type="scientific">Bacillus anthracis</name>
    <dbReference type="NCBI Taxonomy" id="1392"/>
    <lineage>
        <taxon>Bacteria</taxon>
        <taxon>Bacillati</taxon>
        <taxon>Bacillota</taxon>
        <taxon>Bacilli</taxon>
        <taxon>Bacillales</taxon>
        <taxon>Bacillaceae</taxon>
        <taxon>Bacillus</taxon>
        <taxon>Bacillus cereus group</taxon>
    </lineage>
</organism>
<protein>
    <recommendedName>
        <fullName evidence="1">UPF0354 protein BA_4944/GBAA_4944/BAS4588</fullName>
    </recommendedName>
</protein>